<sequence>MIVQRLLNQLIAQDIRDFRVLAAIAKVPRQLFVDEAMAHKAWDNTALPIGHGQTISQPYMVARMTELLIQNDPAHVLEIGTGSGYQTAVLAHLVEHVYTVERIKSLQFQARRRLRQLDLHNVSAKHGNGWLGWPNKGPFDAILVTAAASEVPTALTDQLADGGRLVLPVGDSQQTLQLIERSGSQLTSRILEPVRFVPLIDGDVE</sequence>
<dbReference type="EC" id="2.1.1.77" evidence="1"/>
<dbReference type="EMBL" id="CP000462">
    <property type="protein sequence ID" value="ABK39191.1"/>
    <property type="molecule type" value="Genomic_DNA"/>
</dbReference>
<dbReference type="RefSeq" id="WP_011704775.1">
    <property type="nucleotide sequence ID" value="NC_008570.1"/>
</dbReference>
<dbReference type="RefSeq" id="YP_855370.1">
    <property type="nucleotide sequence ID" value="NC_008570.1"/>
</dbReference>
<dbReference type="SMR" id="A0KGH9"/>
<dbReference type="STRING" id="380703.AHA_0827"/>
<dbReference type="EnsemblBacteria" id="ABK39191">
    <property type="protein sequence ID" value="ABK39191"/>
    <property type="gene ID" value="AHA_0827"/>
</dbReference>
<dbReference type="GeneID" id="4489307"/>
<dbReference type="KEGG" id="aha:AHA_0827"/>
<dbReference type="PATRIC" id="fig|380703.7.peg.827"/>
<dbReference type="eggNOG" id="COG2518">
    <property type="taxonomic scope" value="Bacteria"/>
</dbReference>
<dbReference type="HOGENOM" id="CLU_055432_2_0_6"/>
<dbReference type="OrthoDB" id="9810066at2"/>
<dbReference type="Proteomes" id="UP000000756">
    <property type="component" value="Chromosome"/>
</dbReference>
<dbReference type="GO" id="GO:0005737">
    <property type="term" value="C:cytoplasm"/>
    <property type="evidence" value="ECO:0007669"/>
    <property type="project" value="UniProtKB-SubCell"/>
</dbReference>
<dbReference type="GO" id="GO:0004719">
    <property type="term" value="F:protein-L-isoaspartate (D-aspartate) O-methyltransferase activity"/>
    <property type="evidence" value="ECO:0007669"/>
    <property type="project" value="UniProtKB-UniRule"/>
</dbReference>
<dbReference type="GO" id="GO:0032259">
    <property type="term" value="P:methylation"/>
    <property type="evidence" value="ECO:0007669"/>
    <property type="project" value="UniProtKB-KW"/>
</dbReference>
<dbReference type="GO" id="GO:0036211">
    <property type="term" value="P:protein modification process"/>
    <property type="evidence" value="ECO:0007669"/>
    <property type="project" value="UniProtKB-UniRule"/>
</dbReference>
<dbReference type="GO" id="GO:0030091">
    <property type="term" value="P:protein repair"/>
    <property type="evidence" value="ECO:0007669"/>
    <property type="project" value="UniProtKB-UniRule"/>
</dbReference>
<dbReference type="CDD" id="cd02440">
    <property type="entry name" value="AdoMet_MTases"/>
    <property type="match status" value="1"/>
</dbReference>
<dbReference type="FunFam" id="3.40.50.150:FF:000010">
    <property type="entry name" value="Protein-L-isoaspartate O-methyltransferase"/>
    <property type="match status" value="1"/>
</dbReference>
<dbReference type="Gene3D" id="3.40.50.150">
    <property type="entry name" value="Vaccinia Virus protein VP39"/>
    <property type="match status" value="1"/>
</dbReference>
<dbReference type="HAMAP" id="MF_00090">
    <property type="entry name" value="PIMT"/>
    <property type="match status" value="1"/>
</dbReference>
<dbReference type="InterPro" id="IPR000682">
    <property type="entry name" value="PCMT"/>
</dbReference>
<dbReference type="InterPro" id="IPR029063">
    <property type="entry name" value="SAM-dependent_MTases_sf"/>
</dbReference>
<dbReference type="NCBIfam" id="TIGR00080">
    <property type="entry name" value="pimt"/>
    <property type="match status" value="1"/>
</dbReference>
<dbReference type="NCBIfam" id="NF001453">
    <property type="entry name" value="PRK00312.1"/>
    <property type="match status" value="1"/>
</dbReference>
<dbReference type="PANTHER" id="PTHR11579">
    <property type="entry name" value="PROTEIN-L-ISOASPARTATE O-METHYLTRANSFERASE"/>
    <property type="match status" value="1"/>
</dbReference>
<dbReference type="PANTHER" id="PTHR11579:SF0">
    <property type="entry name" value="PROTEIN-L-ISOASPARTATE(D-ASPARTATE) O-METHYLTRANSFERASE"/>
    <property type="match status" value="1"/>
</dbReference>
<dbReference type="Pfam" id="PF01135">
    <property type="entry name" value="PCMT"/>
    <property type="match status" value="1"/>
</dbReference>
<dbReference type="SUPFAM" id="SSF53335">
    <property type="entry name" value="S-adenosyl-L-methionine-dependent methyltransferases"/>
    <property type="match status" value="1"/>
</dbReference>
<dbReference type="PROSITE" id="PS01279">
    <property type="entry name" value="PCMT"/>
    <property type="match status" value="1"/>
</dbReference>
<reference key="1">
    <citation type="journal article" date="2006" name="J. Bacteriol.">
        <title>Genome sequence of Aeromonas hydrophila ATCC 7966T: jack of all trades.</title>
        <authorList>
            <person name="Seshadri R."/>
            <person name="Joseph S.W."/>
            <person name="Chopra A.K."/>
            <person name="Sha J."/>
            <person name="Shaw J."/>
            <person name="Graf J."/>
            <person name="Haft D.H."/>
            <person name="Wu M."/>
            <person name="Ren Q."/>
            <person name="Rosovitz M.J."/>
            <person name="Madupu R."/>
            <person name="Tallon L."/>
            <person name="Kim M."/>
            <person name="Jin S."/>
            <person name="Vuong H."/>
            <person name="Stine O.C."/>
            <person name="Ali A."/>
            <person name="Horneman A.J."/>
            <person name="Heidelberg J.F."/>
        </authorList>
    </citation>
    <scope>NUCLEOTIDE SEQUENCE [LARGE SCALE GENOMIC DNA]</scope>
    <source>
        <strain>ATCC 7966 / DSM 30187 / BCRC 13018 / CCUG 14551 / JCM 1027 / KCTC 2358 / NCIMB 9240 / NCTC 8049</strain>
    </source>
</reference>
<gene>
    <name evidence="1" type="primary">pcm</name>
    <name type="ordered locus">AHA_0827</name>
</gene>
<proteinExistence type="inferred from homology"/>
<name>PIMT_AERHH</name>
<organism>
    <name type="scientific">Aeromonas hydrophila subsp. hydrophila (strain ATCC 7966 / DSM 30187 / BCRC 13018 / CCUG 14551 / JCM 1027 / KCTC 2358 / NCIMB 9240 / NCTC 8049)</name>
    <dbReference type="NCBI Taxonomy" id="380703"/>
    <lineage>
        <taxon>Bacteria</taxon>
        <taxon>Pseudomonadati</taxon>
        <taxon>Pseudomonadota</taxon>
        <taxon>Gammaproteobacteria</taxon>
        <taxon>Aeromonadales</taxon>
        <taxon>Aeromonadaceae</taxon>
        <taxon>Aeromonas</taxon>
    </lineage>
</organism>
<evidence type="ECO:0000255" key="1">
    <source>
        <dbReference type="HAMAP-Rule" id="MF_00090"/>
    </source>
</evidence>
<protein>
    <recommendedName>
        <fullName evidence="1">Protein-L-isoaspartate O-methyltransferase</fullName>
        <ecNumber evidence="1">2.1.1.77</ecNumber>
    </recommendedName>
    <alternativeName>
        <fullName evidence="1">L-isoaspartyl protein carboxyl methyltransferase</fullName>
    </alternativeName>
    <alternativeName>
        <fullName evidence="1">Protein L-isoaspartyl methyltransferase</fullName>
    </alternativeName>
    <alternativeName>
        <fullName evidence="1">Protein-beta-aspartate methyltransferase</fullName>
        <shortName evidence="1">PIMT</shortName>
    </alternativeName>
</protein>
<comment type="function">
    <text evidence="1">Catalyzes the methyl esterification of L-isoaspartyl residues in peptides and proteins that result from spontaneous decomposition of normal L-aspartyl and L-asparaginyl residues. It plays a role in the repair and/or degradation of damaged proteins.</text>
</comment>
<comment type="catalytic activity">
    <reaction evidence="1">
        <text>[protein]-L-isoaspartate + S-adenosyl-L-methionine = [protein]-L-isoaspartate alpha-methyl ester + S-adenosyl-L-homocysteine</text>
        <dbReference type="Rhea" id="RHEA:12705"/>
        <dbReference type="Rhea" id="RHEA-COMP:12143"/>
        <dbReference type="Rhea" id="RHEA-COMP:12144"/>
        <dbReference type="ChEBI" id="CHEBI:57856"/>
        <dbReference type="ChEBI" id="CHEBI:59789"/>
        <dbReference type="ChEBI" id="CHEBI:90596"/>
        <dbReference type="ChEBI" id="CHEBI:90598"/>
        <dbReference type="EC" id="2.1.1.77"/>
    </reaction>
</comment>
<comment type="subcellular location">
    <subcellularLocation>
        <location evidence="1">Cytoplasm</location>
    </subcellularLocation>
</comment>
<comment type="similarity">
    <text evidence="1">Belongs to the methyltransferase superfamily. L-isoaspartyl/D-aspartyl protein methyltransferase family.</text>
</comment>
<feature type="chain" id="PRO_0000351808" description="Protein-L-isoaspartate O-methyltransferase">
    <location>
        <begin position="1"/>
        <end position="205"/>
    </location>
</feature>
<feature type="active site" evidence="1">
    <location>
        <position position="56"/>
    </location>
</feature>
<accession>A0KGH9</accession>
<keyword id="KW-0963">Cytoplasm</keyword>
<keyword id="KW-0489">Methyltransferase</keyword>
<keyword id="KW-1185">Reference proteome</keyword>
<keyword id="KW-0949">S-adenosyl-L-methionine</keyword>
<keyword id="KW-0808">Transferase</keyword>